<name>RL21_ACTP2</name>
<accession>A3N3T7</accession>
<gene>
    <name evidence="1" type="primary">rplU</name>
    <name type="ordered locus">APL_1999</name>
</gene>
<keyword id="KW-1185">Reference proteome</keyword>
<keyword id="KW-0687">Ribonucleoprotein</keyword>
<keyword id="KW-0689">Ribosomal protein</keyword>
<keyword id="KW-0694">RNA-binding</keyword>
<keyword id="KW-0699">rRNA-binding</keyword>
<reference key="1">
    <citation type="journal article" date="2008" name="J. Bacteriol.">
        <title>The complete genome sequence of Actinobacillus pleuropneumoniae L20 (serotype 5b).</title>
        <authorList>
            <person name="Foote S.J."/>
            <person name="Bosse J.T."/>
            <person name="Bouevitch A.B."/>
            <person name="Langford P.R."/>
            <person name="Young N.M."/>
            <person name="Nash J.H.E."/>
        </authorList>
    </citation>
    <scope>NUCLEOTIDE SEQUENCE [LARGE SCALE GENOMIC DNA]</scope>
    <source>
        <strain>L20</strain>
    </source>
</reference>
<sequence length="103" mass="11441">MYAVFQSGGKQHRVSEGQVVRLEKLEIATGEKVEFDSVLMVVNGEDVKIGAPVVAGAKVVAEVVAQGRGDKVKIVKFRRRKHSRKQQGHRQWFTEVKITGIQA</sequence>
<organism>
    <name type="scientific">Actinobacillus pleuropneumoniae serotype 5b (strain L20)</name>
    <dbReference type="NCBI Taxonomy" id="416269"/>
    <lineage>
        <taxon>Bacteria</taxon>
        <taxon>Pseudomonadati</taxon>
        <taxon>Pseudomonadota</taxon>
        <taxon>Gammaproteobacteria</taxon>
        <taxon>Pasteurellales</taxon>
        <taxon>Pasteurellaceae</taxon>
        <taxon>Actinobacillus</taxon>
    </lineage>
</organism>
<protein>
    <recommendedName>
        <fullName evidence="1">Large ribosomal subunit protein bL21</fullName>
    </recommendedName>
    <alternativeName>
        <fullName evidence="2">50S ribosomal protein L21</fullName>
    </alternativeName>
</protein>
<feature type="chain" id="PRO_1000067794" description="Large ribosomal subunit protein bL21">
    <location>
        <begin position="1"/>
        <end position="103"/>
    </location>
</feature>
<proteinExistence type="inferred from homology"/>
<dbReference type="EMBL" id="CP000569">
    <property type="protein sequence ID" value="ABN75073.1"/>
    <property type="molecule type" value="Genomic_DNA"/>
</dbReference>
<dbReference type="RefSeq" id="WP_005618624.1">
    <property type="nucleotide sequence ID" value="NC_009053.1"/>
</dbReference>
<dbReference type="SMR" id="A3N3T7"/>
<dbReference type="STRING" id="416269.APL_1999"/>
<dbReference type="EnsemblBacteria" id="ABN75073">
    <property type="protein sequence ID" value="ABN75073"/>
    <property type="gene ID" value="APL_1999"/>
</dbReference>
<dbReference type="GeneID" id="92743373"/>
<dbReference type="KEGG" id="apl:APL_1999"/>
<dbReference type="eggNOG" id="COG0261">
    <property type="taxonomic scope" value="Bacteria"/>
</dbReference>
<dbReference type="HOGENOM" id="CLU_061463_3_2_6"/>
<dbReference type="Proteomes" id="UP000001432">
    <property type="component" value="Chromosome"/>
</dbReference>
<dbReference type="GO" id="GO:0005737">
    <property type="term" value="C:cytoplasm"/>
    <property type="evidence" value="ECO:0007669"/>
    <property type="project" value="UniProtKB-ARBA"/>
</dbReference>
<dbReference type="GO" id="GO:1990904">
    <property type="term" value="C:ribonucleoprotein complex"/>
    <property type="evidence" value="ECO:0007669"/>
    <property type="project" value="UniProtKB-KW"/>
</dbReference>
<dbReference type="GO" id="GO:0005840">
    <property type="term" value="C:ribosome"/>
    <property type="evidence" value="ECO:0007669"/>
    <property type="project" value="UniProtKB-KW"/>
</dbReference>
<dbReference type="GO" id="GO:0019843">
    <property type="term" value="F:rRNA binding"/>
    <property type="evidence" value="ECO:0007669"/>
    <property type="project" value="UniProtKB-UniRule"/>
</dbReference>
<dbReference type="GO" id="GO:0003735">
    <property type="term" value="F:structural constituent of ribosome"/>
    <property type="evidence" value="ECO:0007669"/>
    <property type="project" value="InterPro"/>
</dbReference>
<dbReference type="GO" id="GO:0006412">
    <property type="term" value="P:translation"/>
    <property type="evidence" value="ECO:0007669"/>
    <property type="project" value="UniProtKB-UniRule"/>
</dbReference>
<dbReference type="HAMAP" id="MF_01363">
    <property type="entry name" value="Ribosomal_bL21"/>
    <property type="match status" value="1"/>
</dbReference>
<dbReference type="InterPro" id="IPR028909">
    <property type="entry name" value="bL21-like"/>
</dbReference>
<dbReference type="InterPro" id="IPR036164">
    <property type="entry name" value="bL21-like_sf"/>
</dbReference>
<dbReference type="InterPro" id="IPR001787">
    <property type="entry name" value="Ribosomal_bL21"/>
</dbReference>
<dbReference type="InterPro" id="IPR018258">
    <property type="entry name" value="Ribosomal_bL21_CS"/>
</dbReference>
<dbReference type="NCBIfam" id="TIGR00061">
    <property type="entry name" value="L21"/>
    <property type="match status" value="1"/>
</dbReference>
<dbReference type="PANTHER" id="PTHR21349">
    <property type="entry name" value="50S RIBOSOMAL PROTEIN L21"/>
    <property type="match status" value="1"/>
</dbReference>
<dbReference type="PANTHER" id="PTHR21349:SF0">
    <property type="entry name" value="LARGE RIBOSOMAL SUBUNIT PROTEIN BL21M"/>
    <property type="match status" value="1"/>
</dbReference>
<dbReference type="Pfam" id="PF00829">
    <property type="entry name" value="Ribosomal_L21p"/>
    <property type="match status" value="1"/>
</dbReference>
<dbReference type="SUPFAM" id="SSF141091">
    <property type="entry name" value="L21p-like"/>
    <property type="match status" value="1"/>
</dbReference>
<dbReference type="PROSITE" id="PS01169">
    <property type="entry name" value="RIBOSOMAL_L21"/>
    <property type="match status" value="1"/>
</dbReference>
<evidence type="ECO:0000255" key="1">
    <source>
        <dbReference type="HAMAP-Rule" id="MF_01363"/>
    </source>
</evidence>
<evidence type="ECO:0000305" key="2"/>
<comment type="function">
    <text evidence="1">This protein binds to 23S rRNA in the presence of protein L20.</text>
</comment>
<comment type="subunit">
    <text evidence="1">Part of the 50S ribosomal subunit. Contacts protein L20.</text>
</comment>
<comment type="similarity">
    <text evidence="1">Belongs to the bacterial ribosomal protein bL21 family.</text>
</comment>